<protein>
    <recommendedName>
        <fullName evidence="5">Small ribosomal subunit protein uS5m</fullName>
    </recommendedName>
    <alternativeName>
        <fullName>28S ribosomal protein S5, mitochondrial</fullName>
        <shortName>MRP-S5</shortName>
        <shortName>S5mt</shortName>
    </alternativeName>
</protein>
<dbReference type="EMBL" id="BC112674">
    <property type="protein sequence ID" value="AAI12675.1"/>
    <property type="molecule type" value="mRNA"/>
</dbReference>
<dbReference type="RefSeq" id="NP_001039588.1">
    <property type="nucleotide sequence ID" value="NM_001046123.2"/>
</dbReference>
<dbReference type="PDB" id="3JD5">
    <property type="method" value="EM"/>
    <property type="resolution" value="7.00 A"/>
    <property type="chains" value="E=1-430"/>
</dbReference>
<dbReference type="PDB" id="6NEQ">
    <property type="method" value="EM"/>
    <property type="resolution" value="3.32 A"/>
    <property type="chains" value="E=1-430"/>
</dbReference>
<dbReference type="PDB" id="6NF8">
    <property type="method" value="EM"/>
    <property type="resolution" value="3.48 A"/>
    <property type="chains" value="E=1-430"/>
</dbReference>
<dbReference type="PDBsum" id="3JD5"/>
<dbReference type="PDBsum" id="6NEQ"/>
<dbReference type="PDBsum" id="6NF8"/>
<dbReference type="EMDB" id="EMD-9358"/>
<dbReference type="EMDB" id="EMD-9362"/>
<dbReference type="SMR" id="Q2KID9"/>
<dbReference type="CORUM" id="Q2KID9"/>
<dbReference type="FunCoup" id="Q2KID9">
    <property type="interactions" value="1780"/>
</dbReference>
<dbReference type="IntAct" id="Q2KID9">
    <property type="interactions" value="1"/>
</dbReference>
<dbReference type="STRING" id="9913.ENSBTAP00000069289"/>
<dbReference type="PaxDb" id="9913-ENSBTAP00000010843"/>
<dbReference type="GeneID" id="512469"/>
<dbReference type="KEGG" id="bta:512469"/>
<dbReference type="CTD" id="64969"/>
<dbReference type="VEuPathDB" id="HostDB:ENSBTAG00000008241"/>
<dbReference type="eggNOG" id="KOG2646">
    <property type="taxonomic scope" value="Eukaryota"/>
</dbReference>
<dbReference type="HOGENOM" id="CLU_050434_0_0_1"/>
<dbReference type="InParanoid" id="Q2KID9"/>
<dbReference type="OMA" id="LICHRAI"/>
<dbReference type="OrthoDB" id="309483at2759"/>
<dbReference type="TreeFam" id="TF313823"/>
<dbReference type="Reactome" id="R-BTA-5389840">
    <property type="pathway name" value="Mitochondrial translation elongation"/>
</dbReference>
<dbReference type="Reactome" id="R-BTA-5419276">
    <property type="pathway name" value="Mitochondrial translation termination"/>
</dbReference>
<dbReference type="Proteomes" id="UP000009136">
    <property type="component" value="Chromosome 11"/>
</dbReference>
<dbReference type="Bgee" id="ENSBTAG00000008241">
    <property type="expression patterns" value="Expressed in corpus luteum and 105 other cell types or tissues"/>
</dbReference>
<dbReference type="GO" id="GO:0005743">
    <property type="term" value="C:mitochondrial inner membrane"/>
    <property type="evidence" value="ECO:0000304"/>
    <property type="project" value="Reactome"/>
</dbReference>
<dbReference type="GO" id="GO:0005763">
    <property type="term" value="C:mitochondrial small ribosomal subunit"/>
    <property type="evidence" value="ECO:0000314"/>
    <property type="project" value="UniProtKB"/>
</dbReference>
<dbReference type="GO" id="GO:0003723">
    <property type="term" value="F:RNA binding"/>
    <property type="evidence" value="ECO:0007669"/>
    <property type="project" value="InterPro"/>
</dbReference>
<dbReference type="GO" id="GO:0003735">
    <property type="term" value="F:structural constituent of ribosome"/>
    <property type="evidence" value="ECO:0007005"/>
    <property type="project" value="UniProtKB"/>
</dbReference>
<dbReference type="GO" id="GO:0032543">
    <property type="term" value="P:mitochondrial translation"/>
    <property type="evidence" value="ECO:0007005"/>
    <property type="project" value="UniProtKB"/>
</dbReference>
<dbReference type="GO" id="GO:0006412">
    <property type="term" value="P:translation"/>
    <property type="evidence" value="ECO:0000318"/>
    <property type="project" value="GO_Central"/>
</dbReference>
<dbReference type="FunFam" id="3.30.160.20:FF:000022">
    <property type="entry name" value="28S ribosomal protein S5, mitochondrial"/>
    <property type="match status" value="1"/>
</dbReference>
<dbReference type="FunFam" id="3.30.230.10:FF:000002">
    <property type="entry name" value="30S ribosomal protein S5"/>
    <property type="match status" value="1"/>
</dbReference>
<dbReference type="Gene3D" id="3.30.160.20">
    <property type="match status" value="1"/>
</dbReference>
<dbReference type="Gene3D" id="3.30.230.10">
    <property type="match status" value="1"/>
</dbReference>
<dbReference type="InterPro" id="IPR020568">
    <property type="entry name" value="Ribosomal_Su5_D2-typ_SF"/>
</dbReference>
<dbReference type="InterPro" id="IPR000851">
    <property type="entry name" value="Ribosomal_uS5"/>
</dbReference>
<dbReference type="InterPro" id="IPR005324">
    <property type="entry name" value="Ribosomal_uS5_C"/>
</dbReference>
<dbReference type="InterPro" id="IPR013810">
    <property type="entry name" value="Ribosomal_uS5_N"/>
</dbReference>
<dbReference type="InterPro" id="IPR018192">
    <property type="entry name" value="Ribosomal_uS5_N_CS"/>
</dbReference>
<dbReference type="InterPro" id="IPR048584">
    <property type="entry name" value="Ribosomal_uS5m_N"/>
</dbReference>
<dbReference type="InterPro" id="IPR014721">
    <property type="entry name" value="Ribsml_uS5_D2-typ_fold_subgr"/>
</dbReference>
<dbReference type="PANTHER" id="PTHR48277">
    <property type="entry name" value="MITOCHONDRIAL RIBOSOMAL PROTEIN S5"/>
    <property type="match status" value="1"/>
</dbReference>
<dbReference type="PANTHER" id="PTHR48277:SF1">
    <property type="entry name" value="MITOCHONDRIAL RIBOSOMAL PROTEIN S5"/>
    <property type="match status" value="1"/>
</dbReference>
<dbReference type="Pfam" id="PF00333">
    <property type="entry name" value="Ribosomal_S5"/>
    <property type="match status" value="1"/>
</dbReference>
<dbReference type="Pfam" id="PF03719">
    <property type="entry name" value="Ribosomal_S5_C"/>
    <property type="match status" value="1"/>
</dbReference>
<dbReference type="Pfam" id="PF21251">
    <property type="entry name" value="Ribosomal_uS5m_N"/>
    <property type="match status" value="1"/>
</dbReference>
<dbReference type="SUPFAM" id="SSF54768">
    <property type="entry name" value="dsRNA-binding domain-like"/>
    <property type="match status" value="1"/>
</dbReference>
<dbReference type="SUPFAM" id="SSF54211">
    <property type="entry name" value="Ribosomal protein S5 domain 2-like"/>
    <property type="match status" value="1"/>
</dbReference>
<dbReference type="PROSITE" id="PS00585">
    <property type="entry name" value="RIBOSOMAL_S5"/>
    <property type="match status" value="1"/>
</dbReference>
<dbReference type="PROSITE" id="PS50881">
    <property type="entry name" value="S5_DSRBD"/>
    <property type="match status" value="1"/>
</dbReference>
<feature type="chain" id="PRO_0000240302" description="Small ribosomal subunit protein uS5m">
    <location>
        <begin position="1"/>
        <end position="430"/>
    </location>
</feature>
<feature type="domain" description="S5 DRBM" evidence="1">
    <location>
        <begin position="218"/>
        <end position="282"/>
    </location>
</feature>
<feature type="region of interest" description="Disordered" evidence="2">
    <location>
        <begin position="108"/>
        <end position="128"/>
    </location>
</feature>
<feature type="compositionally biased region" description="Basic residues" evidence="2">
    <location>
        <begin position="111"/>
        <end position="125"/>
    </location>
</feature>
<feature type="sequence conflict" description="In Ref. 2; AA sequence." evidence="5" ref="2">
    <original>K</original>
    <variation>Q</variation>
    <location>
        <position position="405"/>
    </location>
</feature>
<feature type="turn" evidence="6">
    <location>
        <begin position="127"/>
        <end position="129"/>
    </location>
</feature>
<feature type="strand" evidence="6">
    <location>
        <begin position="142"/>
        <end position="146"/>
    </location>
</feature>
<feature type="strand" evidence="6">
    <location>
        <begin position="150"/>
        <end position="153"/>
    </location>
</feature>
<feature type="strand" evidence="7">
    <location>
        <begin position="162"/>
        <end position="164"/>
    </location>
</feature>
<feature type="helix" evidence="6">
    <location>
        <begin position="165"/>
        <end position="184"/>
    </location>
</feature>
<feature type="strand" evidence="6">
    <location>
        <begin position="192"/>
        <end position="194"/>
    </location>
</feature>
<feature type="strand" evidence="7">
    <location>
        <begin position="210"/>
        <end position="212"/>
    </location>
</feature>
<feature type="strand" evidence="6">
    <location>
        <begin position="221"/>
        <end position="228"/>
    </location>
</feature>
<feature type="strand" evidence="6">
    <location>
        <begin position="233"/>
        <end position="235"/>
    </location>
</feature>
<feature type="strand" evidence="6">
    <location>
        <begin position="240"/>
        <end position="246"/>
    </location>
</feature>
<feature type="strand" evidence="6">
    <location>
        <begin position="250"/>
        <end position="254"/>
    </location>
</feature>
<feature type="strand" evidence="6">
    <location>
        <begin position="256"/>
        <end position="263"/>
    </location>
</feature>
<feature type="helix" evidence="6">
    <location>
        <begin position="264"/>
        <end position="275"/>
    </location>
</feature>
<feature type="turn" evidence="6">
    <location>
        <begin position="286"/>
        <end position="288"/>
    </location>
</feature>
<feature type="strand" evidence="7">
    <location>
        <begin position="294"/>
        <end position="298"/>
    </location>
</feature>
<feature type="strand" evidence="6">
    <location>
        <begin position="304"/>
        <end position="306"/>
    </location>
</feature>
<feature type="strand" evidence="6">
    <location>
        <begin position="310"/>
        <end position="312"/>
    </location>
</feature>
<feature type="helix" evidence="6">
    <location>
        <begin position="318"/>
        <end position="327"/>
    </location>
</feature>
<feature type="helix" evidence="6">
    <location>
        <begin position="342"/>
        <end position="354"/>
    </location>
</feature>
<feature type="helix" evidence="6">
    <location>
        <begin position="359"/>
        <end position="366"/>
    </location>
</feature>
<feature type="strand" evidence="6">
    <location>
        <begin position="368"/>
        <end position="373"/>
    </location>
</feature>
<feature type="strand" evidence="6">
    <location>
        <begin position="375"/>
        <end position="377"/>
    </location>
</feature>
<feature type="strand" evidence="6">
    <location>
        <begin position="382"/>
        <end position="385"/>
    </location>
</feature>
<feature type="helix" evidence="6">
    <location>
        <begin position="409"/>
        <end position="413"/>
    </location>
</feature>
<feature type="turn" evidence="6">
    <location>
        <begin position="414"/>
        <end position="416"/>
    </location>
</feature>
<organism>
    <name type="scientific">Bos taurus</name>
    <name type="common">Bovine</name>
    <dbReference type="NCBI Taxonomy" id="9913"/>
    <lineage>
        <taxon>Eukaryota</taxon>
        <taxon>Metazoa</taxon>
        <taxon>Chordata</taxon>
        <taxon>Craniata</taxon>
        <taxon>Vertebrata</taxon>
        <taxon>Euteleostomi</taxon>
        <taxon>Mammalia</taxon>
        <taxon>Eutheria</taxon>
        <taxon>Laurasiatheria</taxon>
        <taxon>Artiodactyla</taxon>
        <taxon>Ruminantia</taxon>
        <taxon>Pecora</taxon>
        <taxon>Bovidae</taxon>
        <taxon>Bovinae</taxon>
        <taxon>Bos</taxon>
    </lineage>
</organism>
<name>RT05_BOVIN</name>
<reference key="1">
    <citation type="submission" date="2006-01" db="EMBL/GenBank/DDBJ databases">
        <authorList>
            <consortium name="NIH - Mammalian Gene Collection (MGC) project"/>
        </authorList>
    </citation>
    <scope>NUCLEOTIDE SEQUENCE [LARGE SCALE MRNA]</scope>
    <source>
        <strain>Hereford</strain>
        <tissue>Hypothalamus</tissue>
    </source>
</reference>
<reference key="2">
    <citation type="journal article" date="2001" name="Protein Sci.">
        <title>Identification of four proteins from the small subunit of the mammalian mitochondrial ribosome using a proteomics approach.</title>
        <authorList>
            <person name="Koc E.C."/>
            <person name="Burkhart W."/>
            <person name="Blackburn K."/>
            <person name="Koc H."/>
            <person name="Moseley A."/>
            <person name="Spremulli L.L."/>
        </authorList>
    </citation>
    <scope>PROTEIN SEQUENCE OF 93-100 AND 396-405</scope>
    <scope>SUBUNIT</scope>
    <scope>SUBCELLULAR LOCATION</scope>
    <source>
        <tissue>Liver</tissue>
    </source>
</reference>
<reference key="3">
    <citation type="journal article" date="2014" name="Proc. Natl. Acad. Sci. U.S.A.">
        <title>Cryo-EM structure of the small subunit of the mammalian mitochondrial ribosome.</title>
        <authorList>
            <person name="Kaushal P.S."/>
            <person name="Sharma M.R."/>
            <person name="Booth T.M."/>
            <person name="Haque E.M."/>
            <person name="Tung C.S."/>
            <person name="Sanbonmatsu K.Y."/>
            <person name="Spremulli L.L."/>
            <person name="Agrawal R.K."/>
        </authorList>
    </citation>
    <scope>STRUCTURE BY ELECTRON MICROSCOPY (7.00 ANGSTROMS)</scope>
    <scope>SUBCELLULAR LOCATION</scope>
    <scope>SUBUNIT</scope>
</reference>
<sequence>MAAAVRAAGFLPALCGASAGRLWSRQLYLNTFPTASIWALKAVPSNGPSSSAGARGRCRSTHLGPALQTQCCTPAPGNVTAQQYRSYSFFTKLTADELWKGALAETGAGARKGRGKRTKRKRRKDLNRGQIIGEGRRGFLWPGLNAPLMKSGAIQTITQRSKEEQEKVEADMVQQREEWDRKRKMKVKRERGWSGNSWGGISLGPPDPGPNGETYDDFDTRILEVRNVFNMTAKEGRKRSVRVLVAVGNGRGAAGFAIGKATERADAFRKAKNRAVHYLHYIERYEDHTIYHDISLTFKRTHIKMKKQPRGYGLRCHRAITTICRLIGIKDMYAKVSGSVNMLSLTRGLFQGLSRQETHQQLADKKSLHVVEFREECGPLPIVVASPQGALRKDPEPEDEVPDIKLDWDDVKAVQGMKRSVWSGLKRAAT</sequence>
<comment type="subunit">
    <text evidence="3 4">Component of the mitochondrial ribosome small subunit (28S) which comprises a 12S rRNA and about 30 distinct proteins.</text>
</comment>
<comment type="subcellular location">
    <subcellularLocation>
        <location evidence="3 4">Mitochondrion</location>
    </subcellularLocation>
</comment>
<comment type="similarity">
    <text evidence="5">Belongs to the universal ribosomal protein uS5 family.</text>
</comment>
<gene>
    <name type="primary">MRPS5</name>
</gene>
<proteinExistence type="evidence at protein level"/>
<accession>Q2KID9</accession>
<accession>P82674</accession>
<keyword id="KW-0002">3D-structure</keyword>
<keyword id="KW-0903">Direct protein sequencing</keyword>
<keyword id="KW-0496">Mitochondrion</keyword>
<keyword id="KW-1185">Reference proteome</keyword>
<keyword id="KW-0687">Ribonucleoprotein</keyword>
<keyword id="KW-0689">Ribosomal protein</keyword>
<evidence type="ECO:0000255" key="1">
    <source>
        <dbReference type="PROSITE-ProRule" id="PRU00268"/>
    </source>
</evidence>
<evidence type="ECO:0000256" key="2">
    <source>
        <dbReference type="SAM" id="MobiDB-lite"/>
    </source>
</evidence>
<evidence type="ECO:0000269" key="3">
    <source>
    </source>
</evidence>
<evidence type="ECO:0000269" key="4">
    <source>
    </source>
</evidence>
<evidence type="ECO:0000305" key="5"/>
<evidence type="ECO:0007829" key="6">
    <source>
        <dbReference type="PDB" id="6NEQ"/>
    </source>
</evidence>
<evidence type="ECO:0007829" key="7">
    <source>
        <dbReference type="PDB" id="6NF8"/>
    </source>
</evidence>